<accession>Q5RFJ6</accession>
<keyword id="KW-1015">Disulfide bond</keyword>
<keyword id="KW-0328">Glycosyltransferase</keyword>
<keyword id="KW-0333">Golgi apparatus</keyword>
<keyword id="KW-0430">Lectin</keyword>
<keyword id="KW-0464">Manganese</keyword>
<keyword id="KW-0472">Membrane</keyword>
<keyword id="KW-0479">Metal-binding</keyword>
<keyword id="KW-1185">Reference proteome</keyword>
<keyword id="KW-0735">Signal-anchor</keyword>
<keyword id="KW-0808">Transferase</keyword>
<keyword id="KW-0812">Transmembrane</keyword>
<keyword id="KW-1133">Transmembrane helix</keyword>
<name>GALT7_PONAB</name>
<gene>
    <name type="primary">GALNT7</name>
</gene>
<sequence>MRLKIGFILRSLLVVGSFLGLVVLWSSLTPRPDDPSPLSRMREDRDVNDPMPNRGGNGLAPGEDRFKPVVPWPHVEGVEVDLESIRRKNKAKNEQEHHAGGDSQKDIMQRQYLTFKPQTFTYRDPVLRPGILGNFEPKEPEPPGVVGGPGEKAKPLVLGPEFKQAIQASIKEFGFNMVASDMISLDRSVNDLRQEECKYWHYDENLLTSSVVIVFHNEGWSTLMRTVHSVIKRTPRKYLAEIVLIDDFSNKEHLKEKLDEYIKLWNGLVKVFRNERREGLIQARSIGAQKAKLGQVLIYLDAHCEVAVNWYAPLVAPISKDRTICTVPLIDVINGNTYEIIPQGGGDEDGYARGAWDWSMLWKRVPLTPQEKRLRKTKTEPYRSPAMAGGLFAIEREFFFELGLYDPGLQIWGGENFEISYKIWQCGGKLLFVPCSRVGHIYRLEGWQGNPPPIYVGSSPTLKNYVRVVEVWWDEYKDYFYASRPESQALPYGDISELKKFREDHNCKSFKWFMEEIAYDITSHYPLPPKNVDWGEIRGFETAYCIDSMGKTNGGFVELGPCHRMGGNQLFRINEANQLMQYDQCLTKGADGSKVMITHCNLNEFKEWQYFKNLHRFTHIPSGKCLDRSEVLHQVFISNCDSSKTTQKWEMNNIHSV</sequence>
<feature type="chain" id="PRO_0000294079" description="N-acetylgalactosaminyltransferase 7">
    <location>
        <begin position="1"/>
        <end position="657"/>
    </location>
</feature>
<feature type="topological domain" description="Cytoplasmic" evidence="3">
    <location>
        <begin position="1"/>
        <end position="6"/>
    </location>
</feature>
<feature type="transmembrane region" description="Helical; Signal-anchor for type II membrane protein" evidence="3">
    <location>
        <begin position="7"/>
        <end position="29"/>
    </location>
</feature>
<feature type="topological domain" description="Lumenal" evidence="3">
    <location>
        <begin position="30"/>
        <end position="657"/>
    </location>
</feature>
<feature type="domain" description="Ricin B-type lectin" evidence="4">
    <location>
        <begin position="532"/>
        <end position="652"/>
    </location>
</feature>
<feature type="region of interest" description="Disordered" evidence="5">
    <location>
        <begin position="31"/>
        <end position="66"/>
    </location>
</feature>
<feature type="region of interest" description="Catalytic subdomain A">
    <location>
        <begin position="206"/>
        <end position="317"/>
    </location>
</feature>
<feature type="region of interest" description="Catalytic subdomain B">
    <location>
        <begin position="381"/>
        <end position="443"/>
    </location>
</feature>
<feature type="binding site" evidence="1">
    <location>
        <position position="247"/>
    </location>
    <ligand>
        <name>substrate</name>
    </ligand>
</feature>
<feature type="binding site" evidence="1">
    <location>
        <position position="277"/>
    </location>
    <ligand>
        <name>substrate</name>
    </ligand>
</feature>
<feature type="binding site" evidence="1">
    <location>
        <position position="301"/>
    </location>
    <ligand>
        <name>Mn(2+)</name>
        <dbReference type="ChEBI" id="CHEBI:29035"/>
    </ligand>
</feature>
<feature type="binding site" evidence="1">
    <location>
        <position position="303"/>
    </location>
    <ligand>
        <name>Mn(2+)</name>
        <dbReference type="ChEBI" id="CHEBI:29035"/>
    </ligand>
</feature>
<feature type="binding site" evidence="1">
    <location>
        <position position="412"/>
    </location>
    <ligand>
        <name>substrate</name>
    </ligand>
</feature>
<feature type="binding site" evidence="1">
    <location>
        <position position="440"/>
    </location>
    <ligand>
        <name>Mn(2+)</name>
        <dbReference type="ChEBI" id="CHEBI:29035"/>
    </ligand>
</feature>
<feature type="binding site" evidence="1">
    <location>
        <position position="443"/>
    </location>
    <ligand>
        <name>substrate</name>
    </ligand>
</feature>
<feature type="disulfide bond" evidence="4">
    <location>
        <begin position="197"/>
        <end position="435"/>
    </location>
</feature>
<feature type="disulfide bond" evidence="4">
    <location>
        <begin position="426"/>
        <end position="507"/>
    </location>
</feature>
<feature type="disulfide bond" evidence="4">
    <location>
        <begin position="545"/>
        <end position="562"/>
    </location>
</feature>
<feature type="disulfide bond" evidence="4">
    <location>
        <begin position="585"/>
        <end position="600"/>
    </location>
</feature>
<feature type="disulfide bond" evidence="4">
    <location>
        <begin position="625"/>
        <end position="640"/>
    </location>
</feature>
<organism>
    <name type="scientific">Pongo abelii</name>
    <name type="common">Sumatran orangutan</name>
    <name type="synonym">Pongo pygmaeus abelii</name>
    <dbReference type="NCBI Taxonomy" id="9601"/>
    <lineage>
        <taxon>Eukaryota</taxon>
        <taxon>Metazoa</taxon>
        <taxon>Chordata</taxon>
        <taxon>Craniata</taxon>
        <taxon>Vertebrata</taxon>
        <taxon>Euteleostomi</taxon>
        <taxon>Mammalia</taxon>
        <taxon>Eutheria</taxon>
        <taxon>Euarchontoglires</taxon>
        <taxon>Primates</taxon>
        <taxon>Haplorrhini</taxon>
        <taxon>Catarrhini</taxon>
        <taxon>Hominidae</taxon>
        <taxon>Pongo</taxon>
    </lineage>
</organism>
<reference key="1">
    <citation type="submission" date="2004-11" db="EMBL/GenBank/DDBJ databases">
        <authorList>
            <consortium name="The German cDNA consortium"/>
        </authorList>
    </citation>
    <scope>NUCLEOTIDE SEQUENCE [LARGE SCALE MRNA]</scope>
    <source>
        <tissue>Kidney</tissue>
    </source>
</reference>
<protein>
    <recommendedName>
        <fullName>N-acetylgalactosaminyltransferase 7</fullName>
        <ecNumber evidence="2">2.4.1.41</ecNumber>
    </recommendedName>
    <alternativeName>
        <fullName>Polypeptide GalNAc transferase 7</fullName>
        <shortName>GalNAc-T7</shortName>
        <shortName>pp-GaNTase 7</shortName>
    </alternativeName>
    <alternativeName>
        <fullName>Protein-UDP acetylgalactosaminyltransferase 7</fullName>
    </alternativeName>
    <alternativeName>
        <fullName>UDP-GalNAc:polypeptide N-acetylgalactosaminyltransferase 7</fullName>
    </alternativeName>
</protein>
<comment type="function">
    <text evidence="2">Glycopeptide transferase involved in O-linked oligosaccharide biosynthesis, which catalyzes the transfer of an N-acetyl-D-galactosamine residue to an already glycosylated peptide. In contrast to other proteins of the family, it does not act as a peptide transferase that transfers GalNAc onto serine or threonine residue on the protein receptor, but instead requires the prior addition of a GalNAc on a peptide before adding additional GalNAc moieties. Some peptide transferase activity is however not excluded, considering that its appropriate peptide substrate may remain unidentified (By similarity).</text>
</comment>
<comment type="catalytic activity">
    <reaction evidence="2">
        <text>L-seryl-[protein] + UDP-N-acetyl-alpha-D-galactosamine = a 3-O-[N-acetyl-alpha-D-galactosaminyl]-L-seryl-[protein] + UDP + H(+)</text>
        <dbReference type="Rhea" id="RHEA:23956"/>
        <dbReference type="Rhea" id="RHEA-COMP:9863"/>
        <dbReference type="Rhea" id="RHEA-COMP:12788"/>
        <dbReference type="ChEBI" id="CHEBI:15378"/>
        <dbReference type="ChEBI" id="CHEBI:29999"/>
        <dbReference type="ChEBI" id="CHEBI:53604"/>
        <dbReference type="ChEBI" id="CHEBI:58223"/>
        <dbReference type="ChEBI" id="CHEBI:67138"/>
        <dbReference type="EC" id="2.4.1.41"/>
    </reaction>
</comment>
<comment type="catalytic activity">
    <reaction evidence="2">
        <text>L-threonyl-[protein] + UDP-N-acetyl-alpha-D-galactosamine = a 3-O-[N-acetyl-alpha-D-galactosaminyl]-L-threonyl-[protein] + UDP + H(+)</text>
        <dbReference type="Rhea" id="RHEA:52424"/>
        <dbReference type="Rhea" id="RHEA-COMP:11060"/>
        <dbReference type="Rhea" id="RHEA-COMP:11689"/>
        <dbReference type="ChEBI" id="CHEBI:15378"/>
        <dbReference type="ChEBI" id="CHEBI:30013"/>
        <dbReference type="ChEBI" id="CHEBI:58223"/>
        <dbReference type="ChEBI" id="CHEBI:67138"/>
        <dbReference type="ChEBI" id="CHEBI:87075"/>
        <dbReference type="EC" id="2.4.1.41"/>
    </reaction>
</comment>
<comment type="cofactor">
    <cofactor evidence="1">
        <name>Mn(2+)</name>
        <dbReference type="ChEBI" id="CHEBI:29035"/>
    </cofactor>
</comment>
<comment type="pathway">
    <text evidence="2">Protein modification; protein glycosylation.</text>
</comment>
<comment type="subcellular location">
    <subcellularLocation>
        <location evidence="1">Golgi apparatus membrane</location>
        <topology evidence="1">Single-pass type II membrane protein</topology>
    </subcellularLocation>
</comment>
<comment type="domain">
    <text evidence="1">There are two conserved domains in the glycosyltransferase region: the N-terminal domain (domain A, also called GT1 motif), which is probably involved in manganese coordination and substrate binding and the C-terminal domain (domain B, also called Gal/GalNAc-T motif), which is probably involved in catalytic reaction and UDP-Gal binding.</text>
</comment>
<comment type="domain">
    <text evidence="1">The ricin B-type lectin domain binds to GalNAc and contributes to the glycopeptide specificity.</text>
</comment>
<comment type="similarity">
    <text evidence="6">Belongs to the glycosyltransferase 2 family. GalNAc-T subfamily.</text>
</comment>
<proteinExistence type="evidence at transcript level"/>
<evidence type="ECO:0000250" key="1"/>
<evidence type="ECO:0000250" key="2">
    <source>
        <dbReference type="UniProtKB" id="Q86SF2"/>
    </source>
</evidence>
<evidence type="ECO:0000255" key="3"/>
<evidence type="ECO:0000255" key="4">
    <source>
        <dbReference type="PROSITE-ProRule" id="PRU00174"/>
    </source>
</evidence>
<evidence type="ECO:0000256" key="5">
    <source>
        <dbReference type="SAM" id="MobiDB-lite"/>
    </source>
</evidence>
<evidence type="ECO:0000305" key="6"/>
<dbReference type="EC" id="2.4.1.41" evidence="2"/>
<dbReference type="EMBL" id="CR857160">
    <property type="protein sequence ID" value="CAH89461.1"/>
    <property type="molecule type" value="mRNA"/>
</dbReference>
<dbReference type="RefSeq" id="NP_001124628.1">
    <property type="nucleotide sequence ID" value="NM_001131156.2"/>
</dbReference>
<dbReference type="SMR" id="Q5RFJ6"/>
<dbReference type="FunCoup" id="Q5RFJ6">
    <property type="interactions" value="1245"/>
</dbReference>
<dbReference type="STRING" id="9601.ENSPPYP00000016986"/>
<dbReference type="CAZy" id="CBM13">
    <property type="family name" value="Carbohydrate-Binding Module Family 13"/>
</dbReference>
<dbReference type="CAZy" id="GT27">
    <property type="family name" value="Glycosyltransferase Family 27"/>
</dbReference>
<dbReference type="Ensembl" id="ENSPPYT00000017673.2">
    <property type="protein sequence ID" value="ENSPPYP00000016986.1"/>
    <property type="gene ID" value="ENSPPYG00000015203.2"/>
</dbReference>
<dbReference type="GeneID" id="100171466"/>
<dbReference type="KEGG" id="pon:100171466"/>
<dbReference type="CTD" id="51809"/>
<dbReference type="eggNOG" id="KOG3737">
    <property type="taxonomic scope" value="Eukaryota"/>
</dbReference>
<dbReference type="GeneTree" id="ENSGT00940000158105"/>
<dbReference type="HOGENOM" id="CLU_013477_0_1_1"/>
<dbReference type="InParanoid" id="Q5RFJ6"/>
<dbReference type="OMA" id="QWFMDNI"/>
<dbReference type="OrthoDB" id="6072411at2759"/>
<dbReference type="TreeFam" id="TF352176"/>
<dbReference type="UniPathway" id="UPA00378"/>
<dbReference type="Proteomes" id="UP000001595">
    <property type="component" value="Chromosome 4"/>
</dbReference>
<dbReference type="GO" id="GO:0000139">
    <property type="term" value="C:Golgi membrane"/>
    <property type="evidence" value="ECO:0007669"/>
    <property type="project" value="UniProtKB-SubCell"/>
</dbReference>
<dbReference type="GO" id="GO:0030246">
    <property type="term" value="F:carbohydrate binding"/>
    <property type="evidence" value="ECO:0007669"/>
    <property type="project" value="UniProtKB-KW"/>
</dbReference>
<dbReference type="GO" id="GO:0046872">
    <property type="term" value="F:metal ion binding"/>
    <property type="evidence" value="ECO:0007669"/>
    <property type="project" value="UniProtKB-KW"/>
</dbReference>
<dbReference type="GO" id="GO:0004653">
    <property type="term" value="F:polypeptide N-acetylgalactosaminyltransferase activity"/>
    <property type="evidence" value="ECO:0007669"/>
    <property type="project" value="UniProtKB-EC"/>
</dbReference>
<dbReference type="GO" id="GO:0006493">
    <property type="term" value="P:protein O-linked glycosylation"/>
    <property type="evidence" value="ECO:0007669"/>
    <property type="project" value="Ensembl"/>
</dbReference>
<dbReference type="CDD" id="cd23437">
    <property type="entry name" value="beta-trefoil_Ricin_GALNT7"/>
    <property type="match status" value="1"/>
</dbReference>
<dbReference type="CDD" id="cd02510">
    <property type="entry name" value="pp-GalNAc-T"/>
    <property type="match status" value="1"/>
</dbReference>
<dbReference type="FunFam" id="2.80.10.50:FF:000019">
    <property type="entry name" value="Polypeptide N-acetylgalactosaminyltransferase"/>
    <property type="match status" value="1"/>
</dbReference>
<dbReference type="FunFam" id="3.90.550.10:FF:000031">
    <property type="entry name" value="Polypeptide N-acetylgalactosaminyltransferase"/>
    <property type="match status" value="1"/>
</dbReference>
<dbReference type="Gene3D" id="2.80.10.50">
    <property type="match status" value="1"/>
</dbReference>
<dbReference type="Gene3D" id="3.90.550.10">
    <property type="entry name" value="Spore Coat Polysaccharide Biosynthesis Protein SpsA, Chain A"/>
    <property type="match status" value="1"/>
</dbReference>
<dbReference type="InterPro" id="IPR045885">
    <property type="entry name" value="GalNAc-T"/>
</dbReference>
<dbReference type="InterPro" id="IPR001173">
    <property type="entry name" value="Glyco_trans_2-like"/>
</dbReference>
<dbReference type="InterPro" id="IPR029044">
    <property type="entry name" value="Nucleotide-diphossugar_trans"/>
</dbReference>
<dbReference type="InterPro" id="IPR035992">
    <property type="entry name" value="Ricin_B-like_lectins"/>
</dbReference>
<dbReference type="InterPro" id="IPR000772">
    <property type="entry name" value="Ricin_B_lectin"/>
</dbReference>
<dbReference type="PANTHER" id="PTHR11675">
    <property type="entry name" value="N-ACETYLGALACTOSAMINYLTRANSFERASE"/>
    <property type="match status" value="1"/>
</dbReference>
<dbReference type="PANTHER" id="PTHR11675:SF68">
    <property type="entry name" value="N-ACETYLGALACTOSAMINYLTRANSFERASE 7"/>
    <property type="match status" value="1"/>
</dbReference>
<dbReference type="Pfam" id="PF00535">
    <property type="entry name" value="Glycos_transf_2"/>
    <property type="match status" value="1"/>
</dbReference>
<dbReference type="Pfam" id="PF00652">
    <property type="entry name" value="Ricin_B_lectin"/>
    <property type="match status" value="1"/>
</dbReference>
<dbReference type="SMART" id="SM00458">
    <property type="entry name" value="RICIN"/>
    <property type="match status" value="1"/>
</dbReference>
<dbReference type="SUPFAM" id="SSF53448">
    <property type="entry name" value="Nucleotide-diphospho-sugar transferases"/>
    <property type="match status" value="1"/>
</dbReference>
<dbReference type="SUPFAM" id="SSF50370">
    <property type="entry name" value="Ricin B-like lectins"/>
    <property type="match status" value="1"/>
</dbReference>
<dbReference type="PROSITE" id="PS50231">
    <property type="entry name" value="RICIN_B_LECTIN"/>
    <property type="match status" value="1"/>
</dbReference>